<dbReference type="EMBL" id="L77117">
    <property type="protein sequence ID" value="AAB99284.1"/>
    <property type="molecule type" value="Genomic_DNA"/>
</dbReference>
<dbReference type="PIR" id="E64459">
    <property type="entry name" value="E64459"/>
</dbReference>
<dbReference type="RefSeq" id="WP_010870791.1">
    <property type="nucleotide sequence ID" value="NC_000909.1"/>
</dbReference>
<dbReference type="SMR" id="Q58674"/>
<dbReference type="STRING" id="243232.MJ_1278"/>
<dbReference type="PaxDb" id="243232-MJ_1278"/>
<dbReference type="EnsemblBacteria" id="AAB99284">
    <property type="protein sequence ID" value="AAB99284"/>
    <property type="gene ID" value="MJ_1278"/>
</dbReference>
<dbReference type="GeneID" id="1452176"/>
<dbReference type="KEGG" id="mja:MJ_1278"/>
<dbReference type="eggNOG" id="arCOG10917">
    <property type="taxonomic scope" value="Archaea"/>
</dbReference>
<dbReference type="HOGENOM" id="CLU_1500292_0_0_2"/>
<dbReference type="InParanoid" id="Q58674"/>
<dbReference type="OrthoDB" id="65429at2157"/>
<dbReference type="Proteomes" id="UP000000805">
    <property type="component" value="Chromosome"/>
</dbReference>
<protein>
    <recommendedName>
        <fullName>Uncharacterized protein MJ1278</fullName>
    </recommendedName>
</protein>
<sequence>MGIFDLAKKITHSREYTKSIDEIFVGELINFMYKNGAVLTEINSPTESSHSLTFKFVNHPVLHILRITVDRKIEGMASKILGSQSVLTFEAVIKNDLVEPNDVLVMYQTDFKNMFKIPIFGKVKINHDLNYIIATTTYIEDLGKYIKSDRIEKEALREELEKILNTLVKHLEPLKKKFD</sequence>
<feature type="chain" id="PRO_0000107246" description="Uncharacterized protein MJ1278">
    <location>
        <begin position="1"/>
        <end position="179"/>
    </location>
</feature>
<feature type="coiled-coil region" evidence="1">
    <location>
        <begin position="139"/>
        <end position="172"/>
    </location>
</feature>
<accession>Q58674</accession>
<gene>
    <name type="ordered locus">MJ1278</name>
</gene>
<keyword id="KW-0175">Coiled coil</keyword>
<keyword id="KW-1185">Reference proteome</keyword>
<organism>
    <name type="scientific">Methanocaldococcus jannaschii (strain ATCC 43067 / DSM 2661 / JAL-1 / JCM 10045 / NBRC 100440)</name>
    <name type="common">Methanococcus jannaschii</name>
    <dbReference type="NCBI Taxonomy" id="243232"/>
    <lineage>
        <taxon>Archaea</taxon>
        <taxon>Methanobacteriati</taxon>
        <taxon>Methanobacteriota</taxon>
        <taxon>Methanomada group</taxon>
        <taxon>Methanococci</taxon>
        <taxon>Methanococcales</taxon>
        <taxon>Methanocaldococcaceae</taxon>
        <taxon>Methanocaldococcus</taxon>
    </lineage>
</organism>
<name>Y1278_METJA</name>
<reference key="1">
    <citation type="journal article" date="1996" name="Science">
        <title>Complete genome sequence of the methanogenic archaeon, Methanococcus jannaschii.</title>
        <authorList>
            <person name="Bult C.J."/>
            <person name="White O."/>
            <person name="Olsen G.J."/>
            <person name="Zhou L."/>
            <person name="Fleischmann R.D."/>
            <person name="Sutton G.G."/>
            <person name="Blake J.A."/>
            <person name="FitzGerald L.M."/>
            <person name="Clayton R.A."/>
            <person name="Gocayne J.D."/>
            <person name="Kerlavage A.R."/>
            <person name="Dougherty B.A."/>
            <person name="Tomb J.-F."/>
            <person name="Adams M.D."/>
            <person name="Reich C.I."/>
            <person name="Overbeek R."/>
            <person name="Kirkness E.F."/>
            <person name="Weinstock K.G."/>
            <person name="Merrick J.M."/>
            <person name="Glodek A."/>
            <person name="Scott J.L."/>
            <person name="Geoghagen N.S.M."/>
            <person name="Weidman J.F."/>
            <person name="Fuhrmann J.L."/>
            <person name="Nguyen D."/>
            <person name="Utterback T.R."/>
            <person name="Kelley J.M."/>
            <person name="Peterson J.D."/>
            <person name="Sadow P.W."/>
            <person name="Hanna M.C."/>
            <person name="Cotton M.D."/>
            <person name="Roberts K.M."/>
            <person name="Hurst M.A."/>
            <person name="Kaine B.P."/>
            <person name="Borodovsky M."/>
            <person name="Klenk H.-P."/>
            <person name="Fraser C.M."/>
            <person name="Smith H.O."/>
            <person name="Woese C.R."/>
            <person name="Venter J.C."/>
        </authorList>
    </citation>
    <scope>NUCLEOTIDE SEQUENCE [LARGE SCALE GENOMIC DNA]</scope>
    <source>
        <strain>ATCC 43067 / DSM 2661 / JAL-1 / JCM 10045 / NBRC 100440</strain>
    </source>
</reference>
<proteinExistence type="predicted"/>
<evidence type="ECO:0000255" key="1"/>